<proteinExistence type="inferred from homology"/>
<comment type="catalytic activity">
    <reaction evidence="1">
        <text>(S)-4-amino-5-oxopentanoate = 5-aminolevulinate</text>
        <dbReference type="Rhea" id="RHEA:14265"/>
        <dbReference type="ChEBI" id="CHEBI:57501"/>
        <dbReference type="ChEBI" id="CHEBI:356416"/>
        <dbReference type="EC" id="5.4.3.8"/>
    </reaction>
</comment>
<comment type="cofactor">
    <cofactor evidence="1">
        <name>pyridoxal 5'-phosphate</name>
        <dbReference type="ChEBI" id="CHEBI:597326"/>
    </cofactor>
</comment>
<comment type="pathway">
    <text evidence="1">Porphyrin-containing compound metabolism; protoporphyrin-IX biosynthesis; 5-aminolevulinate from L-glutamyl-tRNA(Glu): step 2/2.</text>
</comment>
<comment type="subunit">
    <text evidence="1">Homodimer.</text>
</comment>
<comment type="subcellular location">
    <subcellularLocation>
        <location evidence="1">Cytoplasm</location>
    </subcellularLocation>
</comment>
<comment type="similarity">
    <text evidence="1">Belongs to the class-III pyridoxal-phosphate-dependent aminotransferase family. HemL subfamily.</text>
</comment>
<accession>Q3SFU6</accession>
<dbReference type="EC" id="5.4.3.8" evidence="1"/>
<dbReference type="EMBL" id="CP000116">
    <property type="protein sequence ID" value="AAZ98510.1"/>
    <property type="molecule type" value="Genomic_DNA"/>
</dbReference>
<dbReference type="RefSeq" id="WP_011313069.1">
    <property type="nucleotide sequence ID" value="NC_007404.1"/>
</dbReference>
<dbReference type="SMR" id="Q3SFU6"/>
<dbReference type="STRING" id="292415.Tbd_2557"/>
<dbReference type="KEGG" id="tbd:Tbd_2557"/>
<dbReference type="eggNOG" id="COG0001">
    <property type="taxonomic scope" value="Bacteria"/>
</dbReference>
<dbReference type="HOGENOM" id="CLU_016922_1_5_4"/>
<dbReference type="OrthoDB" id="3398487at2"/>
<dbReference type="UniPathway" id="UPA00251">
    <property type="reaction ID" value="UER00317"/>
</dbReference>
<dbReference type="Proteomes" id="UP000008291">
    <property type="component" value="Chromosome"/>
</dbReference>
<dbReference type="GO" id="GO:0005737">
    <property type="term" value="C:cytoplasm"/>
    <property type="evidence" value="ECO:0007669"/>
    <property type="project" value="UniProtKB-SubCell"/>
</dbReference>
<dbReference type="GO" id="GO:0042286">
    <property type="term" value="F:glutamate-1-semialdehyde 2,1-aminomutase activity"/>
    <property type="evidence" value="ECO:0007669"/>
    <property type="project" value="UniProtKB-UniRule"/>
</dbReference>
<dbReference type="GO" id="GO:0030170">
    <property type="term" value="F:pyridoxal phosphate binding"/>
    <property type="evidence" value="ECO:0007669"/>
    <property type="project" value="InterPro"/>
</dbReference>
<dbReference type="GO" id="GO:0008483">
    <property type="term" value="F:transaminase activity"/>
    <property type="evidence" value="ECO:0007669"/>
    <property type="project" value="InterPro"/>
</dbReference>
<dbReference type="GO" id="GO:0006782">
    <property type="term" value="P:protoporphyrinogen IX biosynthetic process"/>
    <property type="evidence" value="ECO:0007669"/>
    <property type="project" value="UniProtKB-UniRule"/>
</dbReference>
<dbReference type="CDD" id="cd00610">
    <property type="entry name" value="OAT_like"/>
    <property type="match status" value="1"/>
</dbReference>
<dbReference type="FunFam" id="3.40.640.10:FF:000021">
    <property type="entry name" value="Glutamate-1-semialdehyde 2,1-aminomutase"/>
    <property type="match status" value="1"/>
</dbReference>
<dbReference type="Gene3D" id="3.90.1150.10">
    <property type="entry name" value="Aspartate Aminotransferase, domain 1"/>
    <property type="match status" value="1"/>
</dbReference>
<dbReference type="Gene3D" id="3.40.640.10">
    <property type="entry name" value="Type I PLP-dependent aspartate aminotransferase-like (Major domain)"/>
    <property type="match status" value="1"/>
</dbReference>
<dbReference type="HAMAP" id="MF_00375">
    <property type="entry name" value="HemL_aminotrans_3"/>
    <property type="match status" value="1"/>
</dbReference>
<dbReference type="InterPro" id="IPR004639">
    <property type="entry name" value="4pyrrol_synth_GluAld_NH2Trfase"/>
</dbReference>
<dbReference type="InterPro" id="IPR005814">
    <property type="entry name" value="Aminotrans_3"/>
</dbReference>
<dbReference type="InterPro" id="IPR049704">
    <property type="entry name" value="Aminotrans_3_PPA_site"/>
</dbReference>
<dbReference type="InterPro" id="IPR015424">
    <property type="entry name" value="PyrdxlP-dep_Trfase"/>
</dbReference>
<dbReference type="InterPro" id="IPR015421">
    <property type="entry name" value="PyrdxlP-dep_Trfase_major"/>
</dbReference>
<dbReference type="InterPro" id="IPR015422">
    <property type="entry name" value="PyrdxlP-dep_Trfase_small"/>
</dbReference>
<dbReference type="NCBIfam" id="TIGR00713">
    <property type="entry name" value="hemL"/>
    <property type="match status" value="1"/>
</dbReference>
<dbReference type="NCBIfam" id="NF000818">
    <property type="entry name" value="PRK00062.1"/>
    <property type="match status" value="1"/>
</dbReference>
<dbReference type="PANTHER" id="PTHR43713">
    <property type="entry name" value="GLUTAMATE-1-SEMIALDEHYDE 2,1-AMINOMUTASE"/>
    <property type="match status" value="1"/>
</dbReference>
<dbReference type="PANTHER" id="PTHR43713:SF3">
    <property type="entry name" value="GLUTAMATE-1-SEMIALDEHYDE 2,1-AMINOMUTASE 1, CHLOROPLASTIC-RELATED"/>
    <property type="match status" value="1"/>
</dbReference>
<dbReference type="Pfam" id="PF00202">
    <property type="entry name" value="Aminotran_3"/>
    <property type="match status" value="1"/>
</dbReference>
<dbReference type="SUPFAM" id="SSF53383">
    <property type="entry name" value="PLP-dependent transferases"/>
    <property type="match status" value="1"/>
</dbReference>
<dbReference type="PROSITE" id="PS00600">
    <property type="entry name" value="AA_TRANSFER_CLASS_3"/>
    <property type="match status" value="1"/>
</dbReference>
<evidence type="ECO:0000255" key="1">
    <source>
        <dbReference type="HAMAP-Rule" id="MF_00375"/>
    </source>
</evidence>
<name>GSA_THIDA</name>
<keyword id="KW-0963">Cytoplasm</keyword>
<keyword id="KW-0413">Isomerase</keyword>
<keyword id="KW-0627">Porphyrin biosynthesis</keyword>
<keyword id="KW-0663">Pyridoxal phosphate</keyword>
<keyword id="KW-1185">Reference proteome</keyword>
<feature type="chain" id="PRO_0000243637" description="Glutamate-1-semialdehyde 2,1-aminomutase">
    <location>
        <begin position="1"/>
        <end position="425"/>
    </location>
</feature>
<feature type="modified residue" description="N6-(pyridoxal phosphate)lysine" evidence="1">
    <location>
        <position position="265"/>
    </location>
</feature>
<sequence>MSRNEALFEASQKVIPGGVNSPVRAFRSVGGTPVFFSRARGSRVWDADGREYIDYVGSWGPAILGHAHPGTVKAVQDAAANGLSFGAPSEAELTIATRITELLPSVEKVRLVSSGTEATMSAIRLARGFTGRSKFIKFEGCYHGHADFLLVKAGSGALTFGNPTSAGVPPEVAAQTIVLDYNDVAGLERTFAEIGDEIACIIVEPFAGNMNLVKPSAEFMAAMRRLCDEHGALLIFDEVMTGFRVDLGCAQKLLGIRPDLTTLGKVIGGGMPVGAFGGRADVMDALAPVGPVYQAGTLSGNPVAVAAGLATLASVSEPGFYPALAARTEKLVKGLTAAAREAGVTFCADSVGGMFGLYFAAEPPASFAEVMRCDKEKFNRFFHAMLDHGVYLAPSAFEAGFVSAAHSDADIDATVAAAREVFRTL</sequence>
<gene>
    <name evidence="1" type="primary">hemL</name>
    <name type="ordered locus">Tbd_2557</name>
</gene>
<reference key="1">
    <citation type="journal article" date="2006" name="J. Bacteriol.">
        <title>The genome sequence of the obligately chemolithoautotrophic, facultatively anaerobic bacterium Thiobacillus denitrificans.</title>
        <authorList>
            <person name="Beller H.R."/>
            <person name="Chain P.S."/>
            <person name="Letain T.E."/>
            <person name="Chakicherla A."/>
            <person name="Larimer F.W."/>
            <person name="Richardson P.M."/>
            <person name="Coleman M.A."/>
            <person name="Wood A.P."/>
            <person name="Kelly D.P."/>
        </authorList>
    </citation>
    <scope>NUCLEOTIDE SEQUENCE [LARGE SCALE GENOMIC DNA]</scope>
    <source>
        <strain>ATCC 25259 / T1</strain>
    </source>
</reference>
<organism>
    <name type="scientific">Thiobacillus denitrificans (strain ATCC 25259 / T1)</name>
    <dbReference type="NCBI Taxonomy" id="292415"/>
    <lineage>
        <taxon>Bacteria</taxon>
        <taxon>Pseudomonadati</taxon>
        <taxon>Pseudomonadota</taxon>
        <taxon>Betaproteobacteria</taxon>
        <taxon>Nitrosomonadales</taxon>
        <taxon>Thiobacillaceae</taxon>
        <taxon>Thiobacillus</taxon>
    </lineage>
</organism>
<protein>
    <recommendedName>
        <fullName evidence="1">Glutamate-1-semialdehyde 2,1-aminomutase</fullName>
        <shortName evidence="1">GSA</shortName>
        <ecNumber evidence="1">5.4.3.8</ecNumber>
    </recommendedName>
    <alternativeName>
        <fullName evidence="1">Glutamate-1-semialdehyde aminotransferase</fullName>
        <shortName evidence="1">GSA-AT</shortName>
    </alternativeName>
</protein>